<reference key="1">
    <citation type="journal article" date="2002" name="Nature">
        <title>Comparison of the genomes of two Xanthomonas pathogens with differing host specificities.</title>
        <authorList>
            <person name="da Silva A.C.R."/>
            <person name="Ferro J.A."/>
            <person name="Reinach F.C."/>
            <person name="Farah C.S."/>
            <person name="Furlan L.R."/>
            <person name="Quaggio R.B."/>
            <person name="Monteiro-Vitorello C.B."/>
            <person name="Van Sluys M.A."/>
            <person name="Almeida N.F. Jr."/>
            <person name="Alves L.M.C."/>
            <person name="do Amaral A.M."/>
            <person name="Bertolini M.C."/>
            <person name="Camargo L.E.A."/>
            <person name="Camarotte G."/>
            <person name="Cannavan F."/>
            <person name="Cardozo J."/>
            <person name="Chambergo F."/>
            <person name="Ciapina L.P."/>
            <person name="Cicarelli R.M.B."/>
            <person name="Coutinho L.L."/>
            <person name="Cursino-Santos J.R."/>
            <person name="El-Dorry H."/>
            <person name="Faria J.B."/>
            <person name="Ferreira A.J.S."/>
            <person name="Ferreira R.C.C."/>
            <person name="Ferro M.I.T."/>
            <person name="Formighieri E.F."/>
            <person name="Franco M.C."/>
            <person name="Greggio C.C."/>
            <person name="Gruber A."/>
            <person name="Katsuyama A.M."/>
            <person name="Kishi L.T."/>
            <person name="Leite R.P."/>
            <person name="Lemos E.G.M."/>
            <person name="Lemos M.V.F."/>
            <person name="Locali E.C."/>
            <person name="Machado M.A."/>
            <person name="Madeira A.M.B.N."/>
            <person name="Martinez-Rossi N.M."/>
            <person name="Martins E.C."/>
            <person name="Meidanis J."/>
            <person name="Menck C.F.M."/>
            <person name="Miyaki C.Y."/>
            <person name="Moon D.H."/>
            <person name="Moreira L.M."/>
            <person name="Novo M.T.M."/>
            <person name="Okura V.K."/>
            <person name="Oliveira M.C."/>
            <person name="Oliveira V.R."/>
            <person name="Pereira H.A."/>
            <person name="Rossi A."/>
            <person name="Sena J.A.D."/>
            <person name="Silva C."/>
            <person name="de Souza R.F."/>
            <person name="Spinola L.A.F."/>
            <person name="Takita M.A."/>
            <person name="Tamura R.E."/>
            <person name="Teixeira E.C."/>
            <person name="Tezza R.I.D."/>
            <person name="Trindade dos Santos M."/>
            <person name="Truffi D."/>
            <person name="Tsai S.M."/>
            <person name="White F.F."/>
            <person name="Setubal J.C."/>
            <person name="Kitajima J.P."/>
        </authorList>
    </citation>
    <scope>NUCLEOTIDE SEQUENCE [LARGE SCALE GENOMIC DNA]</scope>
    <source>
        <strain>ATCC 33913 / DSM 3586 / NCPPB 528 / LMG 568 / P 25</strain>
    </source>
</reference>
<sequence>MPSVKVRENEPFEFALRRFKRTCEKAGVLAETRKREFYEKPTQERKRKAAAAVKRQLRRSSRDVTKRQRLY</sequence>
<evidence type="ECO:0000255" key="1">
    <source>
        <dbReference type="HAMAP-Rule" id="MF_00358"/>
    </source>
</evidence>
<evidence type="ECO:0000256" key="2">
    <source>
        <dbReference type="SAM" id="MobiDB-lite"/>
    </source>
</evidence>
<evidence type="ECO:0000305" key="3"/>
<keyword id="KW-1185">Reference proteome</keyword>
<keyword id="KW-0687">Ribonucleoprotein</keyword>
<keyword id="KW-0689">Ribosomal protein</keyword>
<feature type="chain" id="PRO_0000178406" description="Small ribosomal subunit protein bS21">
    <location>
        <begin position="1"/>
        <end position="71"/>
    </location>
</feature>
<feature type="region of interest" description="Disordered" evidence="2">
    <location>
        <begin position="39"/>
        <end position="71"/>
    </location>
</feature>
<feature type="compositionally biased region" description="Basic residues" evidence="2">
    <location>
        <begin position="45"/>
        <end position="59"/>
    </location>
</feature>
<feature type="compositionally biased region" description="Basic and acidic residues" evidence="2">
    <location>
        <begin position="60"/>
        <end position="71"/>
    </location>
</feature>
<organism>
    <name type="scientific">Xanthomonas campestris pv. campestris (strain ATCC 33913 / DSM 3586 / NCPPB 528 / LMG 568 / P 25)</name>
    <dbReference type="NCBI Taxonomy" id="190485"/>
    <lineage>
        <taxon>Bacteria</taxon>
        <taxon>Pseudomonadati</taxon>
        <taxon>Pseudomonadota</taxon>
        <taxon>Gammaproteobacteria</taxon>
        <taxon>Lysobacterales</taxon>
        <taxon>Lysobacteraceae</taxon>
        <taxon>Xanthomonas</taxon>
    </lineage>
</organism>
<proteinExistence type="inferred from homology"/>
<gene>
    <name evidence="1" type="primary">rpsU</name>
    <name type="ordered locus">XCC3817</name>
</gene>
<comment type="similarity">
    <text evidence="1">Belongs to the bacterial ribosomal protein bS21 family.</text>
</comment>
<protein>
    <recommendedName>
        <fullName evidence="1">Small ribosomal subunit protein bS21</fullName>
    </recommendedName>
    <alternativeName>
        <fullName evidence="3">30S ribosomal protein S21</fullName>
    </alternativeName>
</protein>
<dbReference type="EMBL" id="AE008922">
    <property type="protein sequence ID" value="AAM43491.1"/>
    <property type="molecule type" value="Genomic_DNA"/>
</dbReference>
<dbReference type="RefSeq" id="NP_639162.1">
    <property type="nucleotide sequence ID" value="NC_003902.1"/>
</dbReference>
<dbReference type="RefSeq" id="WP_002808376.1">
    <property type="nucleotide sequence ID" value="NC_003902.1"/>
</dbReference>
<dbReference type="SMR" id="P66536"/>
<dbReference type="STRING" id="190485.XCC3817"/>
<dbReference type="EnsemblBacteria" id="AAM43491">
    <property type="protein sequence ID" value="AAM43491"/>
    <property type="gene ID" value="XCC3817"/>
</dbReference>
<dbReference type="GeneID" id="97512051"/>
<dbReference type="KEGG" id="xcc:XCC3817"/>
<dbReference type="PATRIC" id="fig|190485.4.peg.4088"/>
<dbReference type="eggNOG" id="COG0828">
    <property type="taxonomic scope" value="Bacteria"/>
</dbReference>
<dbReference type="HOGENOM" id="CLU_159258_1_0_6"/>
<dbReference type="OrthoDB" id="9799244at2"/>
<dbReference type="PRO" id="PR:P66536"/>
<dbReference type="Proteomes" id="UP000001010">
    <property type="component" value="Chromosome"/>
</dbReference>
<dbReference type="GO" id="GO:1990904">
    <property type="term" value="C:ribonucleoprotein complex"/>
    <property type="evidence" value="ECO:0007669"/>
    <property type="project" value="UniProtKB-KW"/>
</dbReference>
<dbReference type="GO" id="GO:0005840">
    <property type="term" value="C:ribosome"/>
    <property type="evidence" value="ECO:0007669"/>
    <property type="project" value="UniProtKB-KW"/>
</dbReference>
<dbReference type="GO" id="GO:0003735">
    <property type="term" value="F:structural constituent of ribosome"/>
    <property type="evidence" value="ECO:0007669"/>
    <property type="project" value="InterPro"/>
</dbReference>
<dbReference type="GO" id="GO:0006412">
    <property type="term" value="P:translation"/>
    <property type="evidence" value="ECO:0007669"/>
    <property type="project" value="UniProtKB-UniRule"/>
</dbReference>
<dbReference type="Gene3D" id="1.20.5.1150">
    <property type="entry name" value="Ribosomal protein S8"/>
    <property type="match status" value="1"/>
</dbReference>
<dbReference type="HAMAP" id="MF_00358">
    <property type="entry name" value="Ribosomal_bS21"/>
    <property type="match status" value="1"/>
</dbReference>
<dbReference type="InterPro" id="IPR001911">
    <property type="entry name" value="Ribosomal_bS21"/>
</dbReference>
<dbReference type="InterPro" id="IPR018278">
    <property type="entry name" value="Ribosomal_bS21_CS"/>
</dbReference>
<dbReference type="InterPro" id="IPR038380">
    <property type="entry name" value="Ribosomal_bS21_sf"/>
</dbReference>
<dbReference type="NCBIfam" id="TIGR00030">
    <property type="entry name" value="S21p"/>
    <property type="match status" value="1"/>
</dbReference>
<dbReference type="PANTHER" id="PTHR21109">
    <property type="entry name" value="MITOCHONDRIAL 28S RIBOSOMAL PROTEIN S21"/>
    <property type="match status" value="1"/>
</dbReference>
<dbReference type="PANTHER" id="PTHR21109:SF22">
    <property type="entry name" value="SMALL RIBOSOMAL SUBUNIT PROTEIN BS21"/>
    <property type="match status" value="1"/>
</dbReference>
<dbReference type="Pfam" id="PF01165">
    <property type="entry name" value="Ribosomal_S21"/>
    <property type="match status" value="1"/>
</dbReference>
<dbReference type="PRINTS" id="PR00976">
    <property type="entry name" value="RIBOSOMALS21"/>
</dbReference>
<dbReference type="PROSITE" id="PS01181">
    <property type="entry name" value="RIBOSOMAL_S21"/>
    <property type="match status" value="1"/>
</dbReference>
<accession>P66536</accession>
<accession>Q8NL04</accession>
<name>RS21_XANCP</name>